<organism>
    <name type="scientific">Arabidopsis thaliana</name>
    <name type="common">Mouse-ear cress</name>
    <dbReference type="NCBI Taxonomy" id="3702"/>
    <lineage>
        <taxon>Eukaryota</taxon>
        <taxon>Viridiplantae</taxon>
        <taxon>Streptophyta</taxon>
        <taxon>Embryophyta</taxon>
        <taxon>Tracheophyta</taxon>
        <taxon>Spermatophyta</taxon>
        <taxon>Magnoliopsida</taxon>
        <taxon>eudicotyledons</taxon>
        <taxon>Gunneridae</taxon>
        <taxon>Pentapetalae</taxon>
        <taxon>rosids</taxon>
        <taxon>malvids</taxon>
        <taxon>Brassicales</taxon>
        <taxon>Brassicaceae</taxon>
        <taxon>Camelineae</taxon>
        <taxon>Arabidopsis</taxon>
    </lineage>
</organism>
<name>GDL34_ARATH</name>
<comment type="subcellular location">
    <subcellularLocation>
        <location evidence="3">Secreted</location>
    </subcellularLocation>
</comment>
<comment type="similarity">
    <text evidence="3">Belongs to the 'GDSL' lipolytic enzyme family.</text>
</comment>
<protein>
    <recommendedName>
        <fullName>GDSL esterase/lipase At2g04570</fullName>
        <ecNumber>3.1.1.-</ecNumber>
    </recommendedName>
    <alternativeName>
        <fullName>Extracellular lipase At2g04570</fullName>
    </alternativeName>
</protein>
<dbReference type="EC" id="3.1.1.-"/>
<dbReference type="EMBL" id="AC006951">
    <property type="protein sequence ID" value="AAD25823.1"/>
    <property type="molecule type" value="Genomic_DNA"/>
</dbReference>
<dbReference type="EMBL" id="CP002685">
    <property type="protein sequence ID" value="AEC05848.1"/>
    <property type="molecule type" value="Genomic_DNA"/>
</dbReference>
<dbReference type="EMBL" id="AK175324">
    <property type="protein sequence ID" value="BAD43087.1"/>
    <property type="molecule type" value="mRNA"/>
</dbReference>
<dbReference type="EMBL" id="AY087937">
    <property type="protein sequence ID" value="AAM65485.1"/>
    <property type="molecule type" value="mRNA"/>
</dbReference>
<dbReference type="PIR" id="A84459">
    <property type="entry name" value="A84459"/>
</dbReference>
<dbReference type="RefSeq" id="NP_178536.1">
    <property type="nucleotide sequence ID" value="NM_126488.3"/>
</dbReference>
<dbReference type="SMR" id="Q9SJB4"/>
<dbReference type="FunCoup" id="Q9SJB4">
    <property type="interactions" value="112"/>
</dbReference>
<dbReference type="STRING" id="3702.Q9SJB4"/>
<dbReference type="GlyGen" id="Q9SJB4">
    <property type="glycosylation" value="3 sites"/>
</dbReference>
<dbReference type="iPTMnet" id="Q9SJB4"/>
<dbReference type="PaxDb" id="3702-AT2G04570.1"/>
<dbReference type="ProteomicsDB" id="224755"/>
<dbReference type="EnsemblPlants" id="AT2G04570.1">
    <property type="protein sequence ID" value="AT2G04570.1"/>
    <property type="gene ID" value="AT2G04570"/>
</dbReference>
<dbReference type="GeneID" id="814999"/>
<dbReference type="Gramene" id="AT2G04570.1">
    <property type="protein sequence ID" value="AT2G04570.1"/>
    <property type="gene ID" value="AT2G04570"/>
</dbReference>
<dbReference type="KEGG" id="ath:AT2G04570"/>
<dbReference type="Araport" id="AT2G04570"/>
<dbReference type="TAIR" id="AT2G04570"/>
<dbReference type="eggNOG" id="ENOG502QQ8I">
    <property type="taxonomic scope" value="Eukaryota"/>
</dbReference>
<dbReference type="HOGENOM" id="CLU_015101_0_1_1"/>
<dbReference type="InParanoid" id="Q9SJB4"/>
<dbReference type="OMA" id="CTNADKY"/>
<dbReference type="OrthoDB" id="1600564at2759"/>
<dbReference type="PhylomeDB" id="Q9SJB4"/>
<dbReference type="BioCyc" id="ARA:AT2G04570-MONOMER"/>
<dbReference type="PRO" id="PR:Q9SJB4"/>
<dbReference type="Proteomes" id="UP000006548">
    <property type="component" value="Chromosome 2"/>
</dbReference>
<dbReference type="ExpressionAtlas" id="Q9SJB4">
    <property type="expression patterns" value="baseline and differential"/>
</dbReference>
<dbReference type="GO" id="GO:0005576">
    <property type="term" value="C:extracellular region"/>
    <property type="evidence" value="ECO:0007669"/>
    <property type="project" value="UniProtKB-SubCell"/>
</dbReference>
<dbReference type="GO" id="GO:0016297">
    <property type="term" value="F:fatty acyl-[ACP] hydrolase activity"/>
    <property type="evidence" value="ECO:0000314"/>
    <property type="project" value="TAIR"/>
</dbReference>
<dbReference type="GO" id="GO:0016042">
    <property type="term" value="P:lipid catabolic process"/>
    <property type="evidence" value="ECO:0007669"/>
    <property type="project" value="UniProtKB-KW"/>
</dbReference>
<dbReference type="CDD" id="cd01837">
    <property type="entry name" value="SGNH_plant_lipase_like"/>
    <property type="match status" value="1"/>
</dbReference>
<dbReference type="FunFam" id="3.40.50.1110:FF:000003">
    <property type="entry name" value="GDSL esterase/lipase APG"/>
    <property type="match status" value="1"/>
</dbReference>
<dbReference type="Gene3D" id="3.40.50.1110">
    <property type="entry name" value="SGNH hydrolase"/>
    <property type="match status" value="1"/>
</dbReference>
<dbReference type="InterPro" id="IPR001087">
    <property type="entry name" value="GDSL"/>
</dbReference>
<dbReference type="InterPro" id="IPR050592">
    <property type="entry name" value="GDSL_lipolytic_enzyme"/>
</dbReference>
<dbReference type="InterPro" id="IPR036514">
    <property type="entry name" value="SGNH_hydro_sf"/>
</dbReference>
<dbReference type="InterPro" id="IPR035669">
    <property type="entry name" value="SGNH_plant_lipase-like"/>
</dbReference>
<dbReference type="PANTHER" id="PTHR45642">
    <property type="entry name" value="GDSL ESTERASE/LIPASE EXL3"/>
    <property type="match status" value="1"/>
</dbReference>
<dbReference type="PANTHER" id="PTHR45642:SF32">
    <property type="entry name" value="GDSL-LIKE LIPASE_ACYLHYDROLASE"/>
    <property type="match status" value="1"/>
</dbReference>
<dbReference type="Pfam" id="PF00657">
    <property type="entry name" value="Lipase_GDSL"/>
    <property type="match status" value="1"/>
</dbReference>
<dbReference type="SUPFAM" id="SSF52266">
    <property type="entry name" value="SGNH hydrolase"/>
    <property type="match status" value="1"/>
</dbReference>
<reference key="1">
    <citation type="journal article" date="1999" name="Nature">
        <title>Sequence and analysis of chromosome 2 of the plant Arabidopsis thaliana.</title>
        <authorList>
            <person name="Lin X."/>
            <person name="Kaul S."/>
            <person name="Rounsley S.D."/>
            <person name="Shea T.P."/>
            <person name="Benito M.-I."/>
            <person name="Town C.D."/>
            <person name="Fujii C.Y."/>
            <person name="Mason T.M."/>
            <person name="Bowman C.L."/>
            <person name="Barnstead M.E."/>
            <person name="Feldblyum T.V."/>
            <person name="Buell C.R."/>
            <person name="Ketchum K.A."/>
            <person name="Lee J.J."/>
            <person name="Ronning C.M."/>
            <person name="Koo H.L."/>
            <person name="Moffat K.S."/>
            <person name="Cronin L.A."/>
            <person name="Shen M."/>
            <person name="Pai G."/>
            <person name="Van Aken S."/>
            <person name="Umayam L."/>
            <person name="Tallon L.J."/>
            <person name="Gill J.E."/>
            <person name="Adams M.D."/>
            <person name="Carrera A.J."/>
            <person name="Creasy T.H."/>
            <person name="Goodman H.M."/>
            <person name="Somerville C.R."/>
            <person name="Copenhaver G.P."/>
            <person name="Preuss D."/>
            <person name="Nierman W.C."/>
            <person name="White O."/>
            <person name="Eisen J.A."/>
            <person name="Salzberg S.L."/>
            <person name="Fraser C.M."/>
            <person name="Venter J.C."/>
        </authorList>
    </citation>
    <scope>NUCLEOTIDE SEQUENCE [LARGE SCALE GENOMIC DNA]</scope>
    <source>
        <strain>cv. Columbia</strain>
    </source>
</reference>
<reference key="2">
    <citation type="journal article" date="2017" name="Plant J.">
        <title>Araport11: a complete reannotation of the Arabidopsis thaliana reference genome.</title>
        <authorList>
            <person name="Cheng C.Y."/>
            <person name="Krishnakumar V."/>
            <person name="Chan A.P."/>
            <person name="Thibaud-Nissen F."/>
            <person name="Schobel S."/>
            <person name="Town C.D."/>
        </authorList>
    </citation>
    <scope>GENOME REANNOTATION</scope>
    <source>
        <strain>cv. Columbia</strain>
    </source>
</reference>
<reference key="3">
    <citation type="submission" date="2004-09" db="EMBL/GenBank/DDBJ databases">
        <title>Large-scale analysis of RIKEN Arabidopsis full-length (RAFL) cDNAs.</title>
        <authorList>
            <person name="Totoki Y."/>
            <person name="Seki M."/>
            <person name="Ishida J."/>
            <person name="Nakajima M."/>
            <person name="Enju A."/>
            <person name="Kamiya A."/>
            <person name="Narusaka M."/>
            <person name="Shin-i T."/>
            <person name="Nakagawa M."/>
            <person name="Sakamoto N."/>
            <person name="Oishi K."/>
            <person name="Kohara Y."/>
            <person name="Kobayashi M."/>
            <person name="Toyoda A."/>
            <person name="Sakaki Y."/>
            <person name="Sakurai T."/>
            <person name="Iida K."/>
            <person name="Akiyama K."/>
            <person name="Satou M."/>
            <person name="Toyoda T."/>
            <person name="Konagaya A."/>
            <person name="Carninci P."/>
            <person name="Kawai J."/>
            <person name="Hayashizaki Y."/>
            <person name="Shinozaki K."/>
        </authorList>
    </citation>
    <scope>NUCLEOTIDE SEQUENCE [LARGE SCALE MRNA]</scope>
    <source>
        <strain>cv. Columbia</strain>
    </source>
</reference>
<reference key="4">
    <citation type="submission" date="2002-03" db="EMBL/GenBank/DDBJ databases">
        <title>Full-length cDNA from Arabidopsis thaliana.</title>
        <authorList>
            <person name="Brover V.V."/>
            <person name="Troukhan M.E."/>
            <person name="Alexandrov N.A."/>
            <person name="Lu Y.-P."/>
            <person name="Flavell R.B."/>
            <person name="Feldmann K.A."/>
        </authorList>
    </citation>
    <scope>NUCLEOTIDE SEQUENCE [LARGE SCALE MRNA]</scope>
</reference>
<reference key="5">
    <citation type="journal article" date="2004" name="Prog. Lipid Res.">
        <title>GDSL family of serine esterases/lipases.</title>
        <authorList>
            <person name="Akoh C.C."/>
            <person name="Lee G.-C."/>
            <person name="Liaw Y.-C."/>
            <person name="Huang T.-H."/>
            <person name="Shaw J.-F."/>
        </authorList>
    </citation>
    <scope>REVIEW</scope>
</reference>
<reference key="6">
    <citation type="journal article" date="2008" name="Pak. J. Biol. Sci.">
        <title>Sequence analysis of GDSL lipase gene family in Arabidopsis thaliana.</title>
        <authorList>
            <person name="Ling H."/>
        </authorList>
    </citation>
    <scope>GENE FAMILY</scope>
</reference>
<accession>Q9SJB4</accession>
<accession>Q682P3</accession>
<accession>Q8LAB2</accession>
<gene>
    <name type="ordered locus">At2g04570</name>
    <name type="ORF">T1O3.2</name>
</gene>
<proteinExistence type="evidence at transcript level"/>
<evidence type="ECO:0000250" key="1"/>
<evidence type="ECO:0000255" key="2"/>
<evidence type="ECO:0000305" key="3"/>
<feature type="signal peptide" evidence="2">
    <location>
        <begin position="1"/>
        <end position="23"/>
    </location>
</feature>
<feature type="chain" id="PRO_0000367375" description="GDSL esterase/lipase At2g04570">
    <location>
        <begin position="24"/>
        <end position="350"/>
    </location>
</feature>
<feature type="active site" description="Nucleophile" evidence="1">
    <location>
        <position position="35"/>
    </location>
</feature>
<feature type="active site" evidence="1">
    <location>
        <position position="325"/>
    </location>
</feature>
<feature type="active site" evidence="1">
    <location>
        <position position="328"/>
    </location>
</feature>
<feature type="glycosylation site" description="N-linked (GlcNAc...) asparagine" evidence="2">
    <location>
        <position position="98"/>
    </location>
</feature>
<feature type="glycosylation site" description="N-linked (GlcNAc...) asparagine" evidence="2">
    <location>
        <position position="117"/>
    </location>
</feature>
<feature type="glycosylation site" description="N-linked (GlcNAc...) asparagine" evidence="2">
    <location>
        <position position="343"/>
    </location>
</feature>
<feature type="sequence conflict" description="In Ref. 4; AAM65485." evidence="3" ref="4">
    <original>G</original>
    <variation>A</variation>
    <location>
        <position position="151"/>
    </location>
</feature>
<feature type="sequence conflict" description="In Ref. 4; AAM65485." evidence="3" ref="4">
    <original>A</original>
    <variation>V</variation>
    <location>
        <position position="175"/>
    </location>
</feature>
<feature type="sequence conflict" description="In Ref. 4; AAM65485." evidence="3" ref="4">
    <original>S</original>
    <variation>N</variation>
    <location>
        <position position="259"/>
    </location>
</feature>
<feature type="sequence conflict" description="In Ref. 3; BAD43087." evidence="3" ref="3">
    <original>T</original>
    <variation>I</variation>
    <location>
        <position position="345"/>
    </location>
</feature>
<keyword id="KW-0325">Glycoprotein</keyword>
<keyword id="KW-0378">Hydrolase</keyword>
<keyword id="KW-0442">Lipid degradation</keyword>
<keyword id="KW-0443">Lipid metabolism</keyword>
<keyword id="KW-1185">Reference proteome</keyword>
<keyword id="KW-0964">Secreted</keyword>
<keyword id="KW-0732">Signal</keyword>
<sequence>MGHLKSLFTILFLIAMSSTVTFAGKIPAIIVFGDSSVDAGNNNYIPTVARSNFEPYGRDFVGGKPTGRFCNGKIATDFMSEALGLKPIIPAYLDPSYNISDFATGVTFASAATGYDNATSDVLSVLPLWKQLEYYKEYQTKLKAYQGKDRGTETIESSLYLISIGTNDFLENYFAFPGRSSQYSVSLYQDFLAGIAKEFVKKLHGLGARKISLGGLPPMGCMPLERATNIGTGGECVGRYNDIAVQFNSKLDKMVEKLSKELPGSNLVFSNPYEPFMRIIKNPSSFGFEVVGAACCATGMFEMGYGCQRNNPFTCTNADKYVFWDSFHPTQKTNHIMANALMNSTFPHFL</sequence>